<proteinExistence type="inferred from homology"/>
<sequence>MAKGKENRIVITLECTEAKKEGKTVSRYTTTKNKKNTTERLILKKYNPNMQRHTLHKEIK</sequence>
<protein>
    <recommendedName>
        <fullName evidence="1">Large ribosomal subunit protein bL33</fullName>
    </recommendedName>
    <alternativeName>
        <fullName evidence="2">50S ribosomal protein L33</fullName>
    </alternativeName>
</protein>
<organism>
    <name type="scientific">Pelodictyon phaeoclathratiforme (strain DSM 5477 / BU-1)</name>
    <dbReference type="NCBI Taxonomy" id="324925"/>
    <lineage>
        <taxon>Bacteria</taxon>
        <taxon>Pseudomonadati</taxon>
        <taxon>Chlorobiota</taxon>
        <taxon>Chlorobiia</taxon>
        <taxon>Chlorobiales</taxon>
        <taxon>Chlorobiaceae</taxon>
        <taxon>Chlorobium/Pelodictyon group</taxon>
        <taxon>Pelodictyon</taxon>
    </lineage>
</organism>
<gene>
    <name evidence="1" type="primary">rpmG</name>
    <name type="ordered locus">Ppha_1649</name>
</gene>
<dbReference type="EMBL" id="CP001110">
    <property type="protein sequence ID" value="ACF43886.1"/>
    <property type="molecule type" value="Genomic_DNA"/>
</dbReference>
<dbReference type="RefSeq" id="WP_012508373.1">
    <property type="nucleotide sequence ID" value="NC_011060.1"/>
</dbReference>
<dbReference type="SMR" id="B4SAK0"/>
<dbReference type="STRING" id="324925.Ppha_1649"/>
<dbReference type="KEGG" id="pph:Ppha_1649"/>
<dbReference type="eggNOG" id="COG0267">
    <property type="taxonomic scope" value="Bacteria"/>
</dbReference>
<dbReference type="HOGENOM" id="CLU_190949_3_0_10"/>
<dbReference type="Proteomes" id="UP000002724">
    <property type="component" value="Chromosome"/>
</dbReference>
<dbReference type="GO" id="GO:0005737">
    <property type="term" value="C:cytoplasm"/>
    <property type="evidence" value="ECO:0007669"/>
    <property type="project" value="UniProtKB-ARBA"/>
</dbReference>
<dbReference type="GO" id="GO:1990904">
    <property type="term" value="C:ribonucleoprotein complex"/>
    <property type="evidence" value="ECO:0007669"/>
    <property type="project" value="UniProtKB-KW"/>
</dbReference>
<dbReference type="GO" id="GO:0005840">
    <property type="term" value="C:ribosome"/>
    <property type="evidence" value="ECO:0007669"/>
    <property type="project" value="UniProtKB-KW"/>
</dbReference>
<dbReference type="GO" id="GO:0003735">
    <property type="term" value="F:structural constituent of ribosome"/>
    <property type="evidence" value="ECO:0007669"/>
    <property type="project" value="InterPro"/>
</dbReference>
<dbReference type="GO" id="GO:0006412">
    <property type="term" value="P:translation"/>
    <property type="evidence" value="ECO:0007669"/>
    <property type="project" value="UniProtKB-UniRule"/>
</dbReference>
<dbReference type="Gene3D" id="2.20.28.120">
    <property type="entry name" value="Ribosomal protein L33"/>
    <property type="match status" value="1"/>
</dbReference>
<dbReference type="HAMAP" id="MF_00294">
    <property type="entry name" value="Ribosomal_bL33"/>
    <property type="match status" value="1"/>
</dbReference>
<dbReference type="InterPro" id="IPR001705">
    <property type="entry name" value="Ribosomal_bL33"/>
</dbReference>
<dbReference type="InterPro" id="IPR038584">
    <property type="entry name" value="Ribosomal_bL33_sf"/>
</dbReference>
<dbReference type="InterPro" id="IPR011332">
    <property type="entry name" value="Ribosomal_zn-bd"/>
</dbReference>
<dbReference type="NCBIfam" id="NF001764">
    <property type="entry name" value="PRK00504.1"/>
    <property type="match status" value="1"/>
</dbReference>
<dbReference type="NCBIfam" id="NF001860">
    <property type="entry name" value="PRK00595.1"/>
    <property type="match status" value="1"/>
</dbReference>
<dbReference type="NCBIfam" id="TIGR01023">
    <property type="entry name" value="rpmG_bact"/>
    <property type="match status" value="1"/>
</dbReference>
<dbReference type="PANTHER" id="PTHR43168">
    <property type="entry name" value="50S RIBOSOMAL PROTEIN L33, CHLOROPLASTIC"/>
    <property type="match status" value="1"/>
</dbReference>
<dbReference type="PANTHER" id="PTHR43168:SF2">
    <property type="entry name" value="LARGE RIBOSOMAL SUBUNIT PROTEIN BL33C"/>
    <property type="match status" value="1"/>
</dbReference>
<dbReference type="Pfam" id="PF00471">
    <property type="entry name" value="Ribosomal_L33"/>
    <property type="match status" value="1"/>
</dbReference>
<dbReference type="SUPFAM" id="SSF57829">
    <property type="entry name" value="Zn-binding ribosomal proteins"/>
    <property type="match status" value="1"/>
</dbReference>
<feature type="chain" id="PRO_1000115145" description="Large ribosomal subunit protein bL33">
    <location>
        <begin position="1"/>
        <end position="60"/>
    </location>
</feature>
<accession>B4SAK0</accession>
<reference key="1">
    <citation type="submission" date="2008-06" db="EMBL/GenBank/DDBJ databases">
        <title>Complete sequence of Pelodictyon phaeoclathratiforme BU-1.</title>
        <authorList>
            <consortium name="US DOE Joint Genome Institute"/>
            <person name="Lucas S."/>
            <person name="Copeland A."/>
            <person name="Lapidus A."/>
            <person name="Glavina del Rio T."/>
            <person name="Dalin E."/>
            <person name="Tice H."/>
            <person name="Bruce D."/>
            <person name="Goodwin L."/>
            <person name="Pitluck S."/>
            <person name="Schmutz J."/>
            <person name="Larimer F."/>
            <person name="Land M."/>
            <person name="Hauser L."/>
            <person name="Kyrpides N."/>
            <person name="Mikhailova N."/>
            <person name="Liu Z."/>
            <person name="Li T."/>
            <person name="Zhao F."/>
            <person name="Overmann J."/>
            <person name="Bryant D.A."/>
            <person name="Richardson P."/>
        </authorList>
    </citation>
    <scope>NUCLEOTIDE SEQUENCE [LARGE SCALE GENOMIC DNA]</scope>
    <source>
        <strain>DSM 5477 / BU-1</strain>
    </source>
</reference>
<comment type="similarity">
    <text evidence="1">Belongs to the bacterial ribosomal protein bL33 family.</text>
</comment>
<evidence type="ECO:0000255" key="1">
    <source>
        <dbReference type="HAMAP-Rule" id="MF_00294"/>
    </source>
</evidence>
<evidence type="ECO:0000305" key="2"/>
<name>RL33_PELPB</name>
<keyword id="KW-1185">Reference proteome</keyword>
<keyword id="KW-0687">Ribonucleoprotein</keyword>
<keyword id="KW-0689">Ribosomal protein</keyword>